<keyword id="KW-0001">2Fe-2S</keyword>
<keyword id="KW-0963">Cytoplasm</keyword>
<keyword id="KW-0408">Iron</keyword>
<keyword id="KW-0411">Iron-sulfur</keyword>
<keyword id="KW-0479">Metal-binding</keyword>
<keyword id="KW-0663">Pyridoxal phosphate</keyword>
<keyword id="KW-0808">Transferase</keyword>
<accession>A8GWB2</accession>
<evidence type="ECO:0000255" key="1">
    <source>
        <dbReference type="HAMAP-Rule" id="MF_00331"/>
    </source>
</evidence>
<organism>
    <name type="scientific">Rickettsia bellii (strain OSU 85-389)</name>
    <dbReference type="NCBI Taxonomy" id="391896"/>
    <lineage>
        <taxon>Bacteria</taxon>
        <taxon>Pseudomonadati</taxon>
        <taxon>Pseudomonadota</taxon>
        <taxon>Alphaproteobacteria</taxon>
        <taxon>Rickettsiales</taxon>
        <taxon>Rickettsiaceae</taxon>
        <taxon>Rickettsieae</taxon>
        <taxon>Rickettsia</taxon>
        <taxon>belli group</taxon>
    </lineage>
</organism>
<sequence length="410" mass="45234">MNTQLNNLILPIYMDYQATTPLDPRVMEAMLPYFTTKFGNPHSRSHSFGWEAENAVEEARGDIAKLIGAEAKEIIFTSGATESNNLAIKGIAKFYGNKKNHIITVVSEHKCVLDACRHLEQEGVKVTYLPIKPNGIIDLEVLKNAITDQTMLVSVMAVNNEIGVIQPLKEIGKICREKGVFFHSDIAQGFGKVPIDVNECNIDLASISGHKIYGPKGIGALYVRKKPRVRITPLINGGGQERGMRSGTLPTPLIVGLGTAANIAYNEMEKDTKHVNHLFDKFLDAINSQISEVYLNGDKDQRYKGNLNLSFAGVEGESIILAIKDLAVSSGSACTSASLEPSYVLRSMGVDEELAHTSIRFGIGRFTTEQEIDYAVKLICSKINKLRDLSPLWEMMQEGIDLKKIKWATH</sequence>
<protein>
    <recommendedName>
        <fullName evidence="1">Cysteine desulfurase IscS</fullName>
        <ecNumber evidence="1">2.8.1.7</ecNumber>
    </recommendedName>
</protein>
<feature type="chain" id="PRO_1000019434" description="Cysteine desulfurase IscS">
    <location>
        <begin position="1"/>
        <end position="410"/>
    </location>
</feature>
<feature type="active site" description="Cysteine persulfide intermediate" evidence="1">
    <location>
        <position position="334"/>
    </location>
</feature>
<feature type="binding site" evidence="1">
    <location>
        <begin position="80"/>
        <end position="81"/>
    </location>
    <ligand>
        <name>pyridoxal 5'-phosphate</name>
        <dbReference type="ChEBI" id="CHEBI:597326"/>
    </ligand>
</feature>
<feature type="binding site" evidence="1">
    <location>
        <position position="160"/>
    </location>
    <ligand>
        <name>pyridoxal 5'-phosphate</name>
        <dbReference type="ChEBI" id="CHEBI:597326"/>
    </ligand>
</feature>
<feature type="binding site" evidence="1">
    <location>
        <position position="188"/>
    </location>
    <ligand>
        <name>pyridoxal 5'-phosphate</name>
        <dbReference type="ChEBI" id="CHEBI:597326"/>
    </ligand>
</feature>
<feature type="binding site" evidence="1">
    <location>
        <begin position="208"/>
        <end position="210"/>
    </location>
    <ligand>
        <name>pyridoxal 5'-phosphate</name>
        <dbReference type="ChEBI" id="CHEBI:597326"/>
    </ligand>
</feature>
<feature type="binding site" evidence="1">
    <location>
        <position position="248"/>
    </location>
    <ligand>
        <name>pyridoxal 5'-phosphate</name>
        <dbReference type="ChEBI" id="CHEBI:597326"/>
    </ligand>
</feature>
<feature type="binding site" description="via persulfide group" evidence="1">
    <location>
        <position position="334"/>
    </location>
    <ligand>
        <name>[2Fe-2S] cluster</name>
        <dbReference type="ChEBI" id="CHEBI:190135"/>
        <note>ligand shared with IscU</note>
    </ligand>
</feature>
<feature type="modified residue" description="N6-(pyridoxal phosphate)lysine" evidence="1">
    <location>
        <position position="211"/>
    </location>
</feature>
<reference key="1">
    <citation type="submission" date="2007-09" db="EMBL/GenBank/DDBJ databases">
        <title>Complete genome sequencing of Rickettsia bellii.</title>
        <authorList>
            <person name="Madan A."/>
            <person name="Lee H."/>
            <person name="Madan A."/>
            <person name="Yoon J.-G."/>
            <person name="Ryu G.-Y."/>
            <person name="Dasch G."/>
            <person name="Ereemeva M."/>
        </authorList>
    </citation>
    <scope>NUCLEOTIDE SEQUENCE [LARGE SCALE GENOMIC DNA]</scope>
    <source>
        <strain>OSU 85-389</strain>
    </source>
</reference>
<gene>
    <name evidence="1" type="primary">iscS</name>
    <name type="ordered locus">A1I_03930</name>
</gene>
<dbReference type="EC" id="2.8.1.7" evidence="1"/>
<dbReference type="EMBL" id="CP000849">
    <property type="protein sequence ID" value="ABV79139.1"/>
    <property type="molecule type" value="Genomic_DNA"/>
</dbReference>
<dbReference type="RefSeq" id="WP_012151861.1">
    <property type="nucleotide sequence ID" value="NC_009883.1"/>
</dbReference>
<dbReference type="SMR" id="A8GWB2"/>
<dbReference type="KEGG" id="rbo:A1I_03930"/>
<dbReference type="HOGENOM" id="CLU_003433_0_2_5"/>
<dbReference type="UniPathway" id="UPA00266"/>
<dbReference type="GO" id="GO:1990221">
    <property type="term" value="C:L-cysteine desulfurase complex"/>
    <property type="evidence" value="ECO:0007669"/>
    <property type="project" value="UniProtKB-ARBA"/>
</dbReference>
<dbReference type="GO" id="GO:0051537">
    <property type="term" value="F:2 iron, 2 sulfur cluster binding"/>
    <property type="evidence" value="ECO:0007669"/>
    <property type="project" value="UniProtKB-UniRule"/>
</dbReference>
<dbReference type="GO" id="GO:0031071">
    <property type="term" value="F:cysteine desulfurase activity"/>
    <property type="evidence" value="ECO:0007669"/>
    <property type="project" value="UniProtKB-UniRule"/>
</dbReference>
<dbReference type="GO" id="GO:0046872">
    <property type="term" value="F:metal ion binding"/>
    <property type="evidence" value="ECO:0007669"/>
    <property type="project" value="UniProtKB-KW"/>
</dbReference>
<dbReference type="GO" id="GO:0030170">
    <property type="term" value="F:pyridoxal phosphate binding"/>
    <property type="evidence" value="ECO:0007669"/>
    <property type="project" value="UniProtKB-UniRule"/>
</dbReference>
<dbReference type="GO" id="GO:0044571">
    <property type="term" value="P:[2Fe-2S] cluster assembly"/>
    <property type="evidence" value="ECO:0007669"/>
    <property type="project" value="UniProtKB-UniRule"/>
</dbReference>
<dbReference type="FunFam" id="3.40.640.10:FF:000003">
    <property type="entry name" value="Cysteine desulfurase IscS"/>
    <property type="match status" value="1"/>
</dbReference>
<dbReference type="FunFam" id="3.90.1150.10:FF:000002">
    <property type="entry name" value="Cysteine desulfurase IscS"/>
    <property type="match status" value="1"/>
</dbReference>
<dbReference type="Gene3D" id="3.90.1150.10">
    <property type="entry name" value="Aspartate Aminotransferase, domain 1"/>
    <property type="match status" value="1"/>
</dbReference>
<dbReference type="Gene3D" id="3.40.640.10">
    <property type="entry name" value="Type I PLP-dependent aspartate aminotransferase-like (Major domain)"/>
    <property type="match status" value="1"/>
</dbReference>
<dbReference type="HAMAP" id="MF_00331">
    <property type="entry name" value="Cys_desulf_IscS"/>
    <property type="match status" value="1"/>
</dbReference>
<dbReference type="InterPro" id="IPR000192">
    <property type="entry name" value="Aminotrans_V_dom"/>
</dbReference>
<dbReference type="InterPro" id="IPR020578">
    <property type="entry name" value="Aminotrans_V_PyrdxlP_BS"/>
</dbReference>
<dbReference type="InterPro" id="IPR010240">
    <property type="entry name" value="Cys_deSase_IscS"/>
</dbReference>
<dbReference type="InterPro" id="IPR016454">
    <property type="entry name" value="Cysteine_dSase"/>
</dbReference>
<dbReference type="InterPro" id="IPR015424">
    <property type="entry name" value="PyrdxlP-dep_Trfase"/>
</dbReference>
<dbReference type="InterPro" id="IPR015421">
    <property type="entry name" value="PyrdxlP-dep_Trfase_major"/>
</dbReference>
<dbReference type="InterPro" id="IPR015422">
    <property type="entry name" value="PyrdxlP-dep_Trfase_small"/>
</dbReference>
<dbReference type="NCBIfam" id="TIGR02006">
    <property type="entry name" value="IscS"/>
    <property type="match status" value="1"/>
</dbReference>
<dbReference type="NCBIfam" id="NF002806">
    <property type="entry name" value="PRK02948.1"/>
    <property type="match status" value="1"/>
</dbReference>
<dbReference type="NCBIfam" id="NF010611">
    <property type="entry name" value="PRK14012.1"/>
    <property type="match status" value="1"/>
</dbReference>
<dbReference type="PANTHER" id="PTHR11601:SF34">
    <property type="entry name" value="CYSTEINE DESULFURASE"/>
    <property type="match status" value="1"/>
</dbReference>
<dbReference type="PANTHER" id="PTHR11601">
    <property type="entry name" value="CYSTEINE DESULFURYLASE FAMILY MEMBER"/>
    <property type="match status" value="1"/>
</dbReference>
<dbReference type="Pfam" id="PF00266">
    <property type="entry name" value="Aminotran_5"/>
    <property type="match status" value="1"/>
</dbReference>
<dbReference type="PIRSF" id="PIRSF005572">
    <property type="entry name" value="NifS"/>
    <property type="match status" value="1"/>
</dbReference>
<dbReference type="SUPFAM" id="SSF53383">
    <property type="entry name" value="PLP-dependent transferases"/>
    <property type="match status" value="1"/>
</dbReference>
<dbReference type="PROSITE" id="PS00595">
    <property type="entry name" value="AA_TRANSFER_CLASS_5"/>
    <property type="match status" value="1"/>
</dbReference>
<comment type="function">
    <text evidence="1">Master enzyme that delivers sulfur to a number of partners involved in Fe-S cluster assembly, tRNA modification or cofactor biosynthesis. Catalyzes the removal of elemental sulfur atoms from cysteine to produce alanine. Functions as a sulfur delivery protein for Fe-S cluster synthesis onto IscU, an Fe-S scaffold assembly protein, as well as other S acceptor proteins.</text>
</comment>
<comment type="catalytic activity">
    <reaction evidence="1">
        <text>(sulfur carrier)-H + L-cysteine = (sulfur carrier)-SH + L-alanine</text>
        <dbReference type="Rhea" id="RHEA:43892"/>
        <dbReference type="Rhea" id="RHEA-COMP:14737"/>
        <dbReference type="Rhea" id="RHEA-COMP:14739"/>
        <dbReference type="ChEBI" id="CHEBI:29917"/>
        <dbReference type="ChEBI" id="CHEBI:35235"/>
        <dbReference type="ChEBI" id="CHEBI:57972"/>
        <dbReference type="ChEBI" id="CHEBI:64428"/>
        <dbReference type="EC" id="2.8.1.7"/>
    </reaction>
</comment>
<comment type="cofactor">
    <cofactor evidence="1">
        <name>pyridoxal 5'-phosphate</name>
        <dbReference type="ChEBI" id="CHEBI:597326"/>
    </cofactor>
</comment>
<comment type="pathway">
    <text evidence="1">Cofactor biosynthesis; iron-sulfur cluster biosynthesis.</text>
</comment>
<comment type="subunit">
    <text evidence="1">Homodimer. Forms a heterotetramer with IscU, interacts with other sulfur acceptors.</text>
</comment>
<comment type="subcellular location">
    <subcellularLocation>
        <location evidence="1">Cytoplasm</location>
    </subcellularLocation>
</comment>
<comment type="similarity">
    <text evidence="1">Belongs to the class-V pyridoxal-phosphate-dependent aminotransferase family. NifS/IscS subfamily.</text>
</comment>
<proteinExistence type="inferred from homology"/>
<name>ISCS_RICB8</name>